<dbReference type="EC" id="1.1.1.25" evidence="1"/>
<dbReference type="EMBL" id="CP001389">
    <property type="protein sequence ID" value="ACP27082.1"/>
    <property type="molecule type" value="Genomic_DNA"/>
</dbReference>
<dbReference type="RefSeq" id="WP_012709829.1">
    <property type="nucleotide sequence ID" value="NC_012587.1"/>
</dbReference>
<dbReference type="RefSeq" id="YP_002827835.1">
    <property type="nucleotide sequence ID" value="NC_012587.1"/>
</dbReference>
<dbReference type="SMR" id="C3MB73"/>
<dbReference type="STRING" id="394.NGR_c33520"/>
<dbReference type="KEGG" id="rhi:NGR_c33520"/>
<dbReference type="PATRIC" id="fig|394.7.peg.6197"/>
<dbReference type="eggNOG" id="COG0169">
    <property type="taxonomic scope" value="Bacteria"/>
</dbReference>
<dbReference type="HOGENOM" id="CLU_044063_2_0_5"/>
<dbReference type="OrthoDB" id="9792692at2"/>
<dbReference type="UniPathway" id="UPA00053">
    <property type="reaction ID" value="UER00087"/>
</dbReference>
<dbReference type="Proteomes" id="UP000001054">
    <property type="component" value="Chromosome"/>
</dbReference>
<dbReference type="GO" id="GO:0005829">
    <property type="term" value="C:cytosol"/>
    <property type="evidence" value="ECO:0007669"/>
    <property type="project" value="TreeGrafter"/>
</dbReference>
<dbReference type="GO" id="GO:0050661">
    <property type="term" value="F:NADP binding"/>
    <property type="evidence" value="ECO:0007669"/>
    <property type="project" value="InterPro"/>
</dbReference>
<dbReference type="GO" id="GO:0004764">
    <property type="term" value="F:shikimate 3-dehydrogenase (NADP+) activity"/>
    <property type="evidence" value="ECO:0007669"/>
    <property type="project" value="UniProtKB-UniRule"/>
</dbReference>
<dbReference type="GO" id="GO:0008652">
    <property type="term" value="P:amino acid biosynthetic process"/>
    <property type="evidence" value="ECO:0007669"/>
    <property type="project" value="UniProtKB-KW"/>
</dbReference>
<dbReference type="GO" id="GO:0009073">
    <property type="term" value="P:aromatic amino acid family biosynthetic process"/>
    <property type="evidence" value="ECO:0007669"/>
    <property type="project" value="UniProtKB-KW"/>
</dbReference>
<dbReference type="GO" id="GO:0009423">
    <property type="term" value="P:chorismate biosynthetic process"/>
    <property type="evidence" value="ECO:0007669"/>
    <property type="project" value="UniProtKB-UniRule"/>
</dbReference>
<dbReference type="GO" id="GO:0019632">
    <property type="term" value="P:shikimate metabolic process"/>
    <property type="evidence" value="ECO:0007669"/>
    <property type="project" value="InterPro"/>
</dbReference>
<dbReference type="CDD" id="cd01065">
    <property type="entry name" value="NAD_bind_Shikimate_DH"/>
    <property type="match status" value="1"/>
</dbReference>
<dbReference type="Gene3D" id="3.40.50.10860">
    <property type="entry name" value="Leucine Dehydrogenase, chain A, domain 1"/>
    <property type="match status" value="1"/>
</dbReference>
<dbReference type="Gene3D" id="3.40.50.720">
    <property type="entry name" value="NAD(P)-binding Rossmann-like Domain"/>
    <property type="match status" value="1"/>
</dbReference>
<dbReference type="HAMAP" id="MF_00222">
    <property type="entry name" value="Shikimate_DH_AroE"/>
    <property type="match status" value="1"/>
</dbReference>
<dbReference type="InterPro" id="IPR046346">
    <property type="entry name" value="Aminoacid_DH-like_N_sf"/>
</dbReference>
<dbReference type="InterPro" id="IPR036291">
    <property type="entry name" value="NAD(P)-bd_dom_sf"/>
</dbReference>
<dbReference type="InterPro" id="IPR041121">
    <property type="entry name" value="SDH_C"/>
</dbReference>
<dbReference type="InterPro" id="IPR011342">
    <property type="entry name" value="Shikimate_DH"/>
</dbReference>
<dbReference type="InterPro" id="IPR013708">
    <property type="entry name" value="Shikimate_DH-bd_N"/>
</dbReference>
<dbReference type="InterPro" id="IPR022893">
    <property type="entry name" value="Shikimate_DH_fam"/>
</dbReference>
<dbReference type="InterPro" id="IPR006151">
    <property type="entry name" value="Shikm_DH/Glu-tRNA_Rdtase"/>
</dbReference>
<dbReference type="NCBIfam" id="TIGR00507">
    <property type="entry name" value="aroE"/>
    <property type="match status" value="1"/>
</dbReference>
<dbReference type="NCBIfam" id="NF001312">
    <property type="entry name" value="PRK00258.1-4"/>
    <property type="match status" value="1"/>
</dbReference>
<dbReference type="PANTHER" id="PTHR21089:SF1">
    <property type="entry name" value="BIFUNCTIONAL 3-DEHYDROQUINATE DEHYDRATASE_SHIKIMATE DEHYDROGENASE, CHLOROPLASTIC"/>
    <property type="match status" value="1"/>
</dbReference>
<dbReference type="PANTHER" id="PTHR21089">
    <property type="entry name" value="SHIKIMATE DEHYDROGENASE"/>
    <property type="match status" value="1"/>
</dbReference>
<dbReference type="Pfam" id="PF18317">
    <property type="entry name" value="SDH_C"/>
    <property type="match status" value="1"/>
</dbReference>
<dbReference type="Pfam" id="PF01488">
    <property type="entry name" value="Shikimate_DH"/>
    <property type="match status" value="1"/>
</dbReference>
<dbReference type="Pfam" id="PF08501">
    <property type="entry name" value="Shikimate_dh_N"/>
    <property type="match status" value="1"/>
</dbReference>
<dbReference type="SUPFAM" id="SSF53223">
    <property type="entry name" value="Aminoacid dehydrogenase-like, N-terminal domain"/>
    <property type="match status" value="1"/>
</dbReference>
<dbReference type="SUPFAM" id="SSF51735">
    <property type="entry name" value="NAD(P)-binding Rossmann-fold domains"/>
    <property type="match status" value="1"/>
</dbReference>
<name>AROE_SINFN</name>
<comment type="function">
    <text evidence="1">Involved in the biosynthesis of the chorismate, which leads to the biosynthesis of aromatic amino acids. Catalyzes the reversible NADPH linked reduction of 3-dehydroshikimate (DHSA) to yield shikimate (SA).</text>
</comment>
<comment type="catalytic activity">
    <reaction evidence="1">
        <text>shikimate + NADP(+) = 3-dehydroshikimate + NADPH + H(+)</text>
        <dbReference type="Rhea" id="RHEA:17737"/>
        <dbReference type="ChEBI" id="CHEBI:15378"/>
        <dbReference type="ChEBI" id="CHEBI:16630"/>
        <dbReference type="ChEBI" id="CHEBI:36208"/>
        <dbReference type="ChEBI" id="CHEBI:57783"/>
        <dbReference type="ChEBI" id="CHEBI:58349"/>
        <dbReference type="EC" id="1.1.1.25"/>
    </reaction>
</comment>
<comment type="pathway">
    <text evidence="1">Metabolic intermediate biosynthesis; chorismate biosynthesis; chorismate from D-erythrose 4-phosphate and phosphoenolpyruvate: step 4/7.</text>
</comment>
<comment type="subunit">
    <text evidence="1">Homodimer.</text>
</comment>
<comment type="similarity">
    <text evidence="1">Belongs to the shikimate dehydrogenase family.</text>
</comment>
<proteinExistence type="inferred from homology"/>
<organism>
    <name type="scientific">Sinorhizobium fredii (strain NBRC 101917 / NGR234)</name>
    <dbReference type="NCBI Taxonomy" id="394"/>
    <lineage>
        <taxon>Bacteria</taxon>
        <taxon>Pseudomonadati</taxon>
        <taxon>Pseudomonadota</taxon>
        <taxon>Alphaproteobacteria</taxon>
        <taxon>Hyphomicrobiales</taxon>
        <taxon>Rhizobiaceae</taxon>
        <taxon>Sinorhizobium/Ensifer group</taxon>
        <taxon>Sinorhizobium</taxon>
    </lineage>
</organism>
<gene>
    <name evidence="1" type="primary">aroE</name>
    <name type="ordered locus">NGR_c33520</name>
</gene>
<keyword id="KW-0028">Amino-acid biosynthesis</keyword>
<keyword id="KW-0057">Aromatic amino acid biosynthesis</keyword>
<keyword id="KW-0521">NADP</keyword>
<keyword id="KW-0560">Oxidoreductase</keyword>
<keyword id="KW-1185">Reference proteome</keyword>
<feature type="chain" id="PRO_1000204273" description="Shikimate dehydrogenase (NADP(+))">
    <location>
        <begin position="1"/>
        <end position="286"/>
    </location>
</feature>
<feature type="active site" description="Proton acceptor" evidence="1">
    <location>
        <position position="75"/>
    </location>
</feature>
<feature type="binding site" evidence="1">
    <location>
        <begin position="22"/>
        <end position="24"/>
    </location>
    <ligand>
        <name>shikimate</name>
        <dbReference type="ChEBI" id="CHEBI:36208"/>
    </ligand>
</feature>
<feature type="binding site" evidence="1">
    <location>
        <position position="71"/>
    </location>
    <ligand>
        <name>shikimate</name>
        <dbReference type="ChEBI" id="CHEBI:36208"/>
    </ligand>
</feature>
<feature type="binding site" evidence="1">
    <location>
        <position position="87"/>
    </location>
    <ligand>
        <name>NADP(+)</name>
        <dbReference type="ChEBI" id="CHEBI:58349"/>
    </ligand>
</feature>
<feature type="binding site" evidence="1">
    <location>
        <position position="96"/>
    </location>
    <ligand>
        <name>shikimate</name>
        <dbReference type="ChEBI" id="CHEBI:36208"/>
    </ligand>
</feature>
<feature type="binding site" evidence="1">
    <location>
        <position position="111"/>
    </location>
    <ligand>
        <name>shikimate</name>
        <dbReference type="ChEBI" id="CHEBI:36208"/>
    </ligand>
</feature>
<feature type="binding site" evidence="1">
    <location>
        <begin position="136"/>
        <end position="140"/>
    </location>
    <ligand>
        <name>NADP(+)</name>
        <dbReference type="ChEBI" id="CHEBI:58349"/>
    </ligand>
</feature>
<feature type="binding site" evidence="1">
    <location>
        <begin position="160"/>
        <end position="165"/>
    </location>
    <ligand>
        <name>NADP(+)</name>
        <dbReference type="ChEBI" id="CHEBI:58349"/>
    </ligand>
</feature>
<feature type="binding site" evidence="1">
    <location>
        <position position="225"/>
    </location>
    <ligand>
        <name>NADP(+)</name>
        <dbReference type="ChEBI" id="CHEBI:58349"/>
    </ligand>
</feature>
<feature type="binding site" evidence="1">
    <location>
        <position position="227"/>
    </location>
    <ligand>
        <name>shikimate</name>
        <dbReference type="ChEBI" id="CHEBI:36208"/>
    </ligand>
</feature>
<feature type="binding site" evidence="1">
    <location>
        <position position="248"/>
    </location>
    <ligand>
        <name>NADP(+)</name>
        <dbReference type="ChEBI" id="CHEBI:58349"/>
    </ligand>
</feature>
<protein>
    <recommendedName>
        <fullName evidence="1">Shikimate dehydrogenase (NADP(+))</fullName>
        <shortName evidence="1">SDH</shortName>
        <ecNumber evidence="1">1.1.1.25</ecNumber>
    </recommendedName>
</protein>
<accession>C3MB73</accession>
<sequence>MRDSRETFVNHAFVTGYPIKHSRSPLIHGYWLKQFGIAGSYRAHEVTPEAFPEFMGQLRDGGTGFCGGNVTIPHKEMAFELSDRPDELSAELGAANTLWLEDGRICATNTDGRGFVANLDERASGWDRISTAVILGAGGASRAVIQAVRDRGVKTIHVVNRTAARAQELADRFGRAVHAHPIAALSEVMAGAGLFVNTTSLGMDGEPAPAIDFSPLANGAVVTDIVYVPLKTPLLRQAEEQGYRIVDGLGMLLHQAAPGFEKWFGLRPVVDETLRQIIIKDMDVHA</sequence>
<evidence type="ECO:0000255" key="1">
    <source>
        <dbReference type="HAMAP-Rule" id="MF_00222"/>
    </source>
</evidence>
<reference key="1">
    <citation type="journal article" date="2009" name="Appl. Environ. Microbiol.">
        <title>Rhizobium sp. strain NGR234 possesses a remarkable number of secretion systems.</title>
        <authorList>
            <person name="Schmeisser C."/>
            <person name="Liesegang H."/>
            <person name="Krysciak D."/>
            <person name="Bakkou N."/>
            <person name="Le Quere A."/>
            <person name="Wollherr A."/>
            <person name="Heinemeyer I."/>
            <person name="Morgenstern B."/>
            <person name="Pommerening-Roeser A."/>
            <person name="Flores M."/>
            <person name="Palacios R."/>
            <person name="Brenner S."/>
            <person name="Gottschalk G."/>
            <person name="Schmitz R.A."/>
            <person name="Broughton W.J."/>
            <person name="Perret X."/>
            <person name="Strittmatter A.W."/>
            <person name="Streit W.R."/>
        </authorList>
    </citation>
    <scope>NUCLEOTIDE SEQUENCE [LARGE SCALE GENOMIC DNA]</scope>
    <source>
        <strain>NBRC 101917 / NGR234</strain>
    </source>
</reference>